<reference key="1">
    <citation type="journal article" date="1991" name="J. Bacteriol.">
        <title>Identification and molecular characterization of the Alcaligenes eutrophus H16 aco operon genes involved in acetoin catabolism.</title>
        <authorList>
            <person name="Priefert H."/>
            <person name="Hein S."/>
            <person name="Krueger N."/>
            <person name="Zeh K."/>
            <person name="Schmidt B."/>
            <person name="Steinbuechel A."/>
        </authorList>
    </citation>
    <scope>NUCLEOTIDE SEQUENCE [GENOMIC DNA]</scope>
    <scope>PROTEIN SEQUENCE OF 2-32</scope>
</reference>
<reference key="2">
    <citation type="journal article" date="2006" name="Nat. Biotechnol.">
        <title>Genome sequence of the bioplastic-producing 'Knallgas' bacterium Ralstonia eutropha H16.</title>
        <authorList>
            <person name="Pohlmann A."/>
            <person name="Fricke W.F."/>
            <person name="Reinecke F."/>
            <person name="Kusian B."/>
            <person name="Liesegang H."/>
            <person name="Cramm R."/>
            <person name="Eitinger T."/>
            <person name="Ewering C."/>
            <person name="Poetter M."/>
            <person name="Schwartz E."/>
            <person name="Strittmatter A."/>
            <person name="Voss I."/>
            <person name="Gottschalk G."/>
            <person name="Steinbuechel A."/>
            <person name="Friedrich B."/>
            <person name="Bowien B."/>
        </authorList>
    </citation>
    <scope>NUCLEOTIDE SEQUENCE [LARGE SCALE GENOMIC DNA]</scope>
    <source>
        <strain>ATCC 17699 / DSM 428 / KCTC 22496 / NCIMB 10442 / H16 / Stanier 337</strain>
    </source>
</reference>
<gene>
    <name type="primary">acoA</name>
    <name type="ordered locus">H16_B0144</name>
</gene>
<sequence length="333" mass="35375">MTARASQDSAALPLDKETLLTVYRKMRTIRDFEERLHVDFGRGDIPGFVHLYAGEEAAGVGILHHLNDGDRIASTHRGHGHCIAKGVDPVAMMKEIYGKKGGSCNGKGGSMHIADLSKGMMGANGILGAGAPLICGAALAAKFRGKGEVGITFCGDGASNQGTFLESLNLAAVWNLPVIFVIENNGYAESTSRDYGTAVDSYVDRAAGFGIPGVTVDGTDFFAVHEAAGEVIRRAREGGGPSLLECKMVRFYGHFEGDAQTYRAAGELDDIRANKDCLKLFGRAVTQAGVVAREELDTIDREVAALIEHAVQEAKAAPQPGPEDLLTDVYVSY</sequence>
<keyword id="KW-0006">Acetoin catabolism</keyword>
<keyword id="KW-0903">Direct protein sequencing</keyword>
<keyword id="KW-0560">Oxidoreductase</keyword>
<keyword id="KW-1185">Reference proteome</keyword>
<keyword id="KW-0786">Thiamine pyrophosphate</keyword>
<proteinExistence type="evidence at protein level"/>
<evidence type="ECO:0000269" key="1">
    <source>
    </source>
</evidence>
<protein>
    <recommendedName>
        <fullName>Acetoin:2,6-dichlorophenolindophenol oxidoreductase subunit alpha</fullName>
        <shortName>Acetoin:DCPIP oxidoreductase-alpha</shortName>
        <shortName>Ao:DCPIP OR</shortName>
        <ecNumber>1.1.1.-</ecNumber>
    </recommendedName>
</protein>
<organism>
    <name type="scientific">Cupriavidus necator (strain ATCC 17699 / DSM 428 / KCTC 22496 / NCIMB 10442 / H16 / Stanier 337)</name>
    <name type="common">Ralstonia eutropha</name>
    <dbReference type="NCBI Taxonomy" id="381666"/>
    <lineage>
        <taxon>Bacteria</taxon>
        <taxon>Pseudomonadati</taxon>
        <taxon>Pseudomonadota</taxon>
        <taxon>Betaproteobacteria</taxon>
        <taxon>Burkholderiales</taxon>
        <taxon>Burkholderiaceae</taxon>
        <taxon>Cupriavidus</taxon>
    </lineage>
</organism>
<name>ACOA_CUPNH</name>
<accession>P27745</accession>
<accession>Q0K4X4</accession>
<dbReference type="EC" id="1.1.1.-"/>
<dbReference type="EMBL" id="M66060">
    <property type="protein sequence ID" value="AAA21948.1"/>
    <property type="molecule type" value="Genomic_DNA"/>
</dbReference>
<dbReference type="EMBL" id="AM260480">
    <property type="protein sequence ID" value="CAJ94950.1"/>
    <property type="molecule type" value="Genomic_DNA"/>
</dbReference>
<dbReference type="PIR" id="B42462">
    <property type="entry name" value="DEALXE"/>
</dbReference>
<dbReference type="RefSeq" id="WP_011616379.1">
    <property type="nucleotide sequence ID" value="NC_008314.1"/>
</dbReference>
<dbReference type="SMR" id="P27745"/>
<dbReference type="STRING" id="381666.H16_B0144"/>
<dbReference type="KEGG" id="reh:H16_B0144"/>
<dbReference type="eggNOG" id="COG1071">
    <property type="taxonomic scope" value="Bacteria"/>
</dbReference>
<dbReference type="HOGENOM" id="CLU_029393_5_0_4"/>
<dbReference type="OrthoDB" id="9766715at2"/>
<dbReference type="BRENDA" id="2.3.1.190">
    <property type="organism ID" value="11493"/>
</dbReference>
<dbReference type="UniPathway" id="UPA00040"/>
<dbReference type="Proteomes" id="UP000008210">
    <property type="component" value="Chromosome 2"/>
</dbReference>
<dbReference type="GO" id="GO:0004739">
    <property type="term" value="F:pyruvate dehydrogenase (acetyl-transferring) activity"/>
    <property type="evidence" value="ECO:0007669"/>
    <property type="project" value="TreeGrafter"/>
</dbReference>
<dbReference type="GO" id="GO:0045150">
    <property type="term" value="P:acetoin catabolic process"/>
    <property type="evidence" value="ECO:0007669"/>
    <property type="project" value="UniProtKB-UniPathway"/>
</dbReference>
<dbReference type="GO" id="GO:0006086">
    <property type="term" value="P:pyruvate decarboxylation to acetyl-CoA"/>
    <property type="evidence" value="ECO:0007669"/>
    <property type="project" value="TreeGrafter"/>
</dbReference>
<dbReference type="CDD" id="cd02000">
    <property type="entry name" value="TPP_E1_PDC_ADC_BCADC"/>
    <property type="match status" value="1"/>
</dbReference>
<dbReference type="Gene3D" id="3.40.50.970">
    <property type="match status" value="1"/>
</dbReference>
<dbReference type="InterPro" id="IPR001017">
    <property type="entry name" value="DH_E1"/>
</dbReference>
<dbReference type="InterPro" id="IPR050642">
    <property type="entry name" value="PDH_E1_Alpha_Subunit"/>
</dbReference>
<dbReference type="InterPro" id="IPR029061">
    <property type="entry name" value="THDP-binding"/>
</dbReference>
<dbReference type="PANTHER" id="PTHR11516:SF60">
    <property type="entry name" value="PYRUVATE DEHYDROGENASE E1 COMPONENT SUBUNIT ALPHA"/>
    <property type="match status" value="1"/>
</dbReference>
<dbReference type="PANTHER" id="PTHR11516">
    <property type="entry name" value="PYRUVATE DEHYDROGENASE E1 COMPONENT, ALPHA SUBUNIT BACTERIAL AND ORGANELLAR"/>
    <property type="match status" value="1"/>
</dbReference>
<dbReference type="Pfam" id="PF00676">
    <property type="entry name" value="E1_dh"/>
    <property type="match status" value="1"/>
</dbReference>
<dbReference type="SUPFAM" id="SSF52518">
    <property type="entry name" value="Thiamin diphosphate-binding fold (THDP-binding)"/>
    <property type="match status" value="1"/>
</dbReference>
<feature type="initiator methionine" description="Removed" evidence="1">
    <location>
        <position position="1"/>
    </location>
</feature>
<feature type="chain" id="PRO_0000162307" description="Acetoin:2,6-dichlorophenolindophenol oxidoreductase subunit alpha">
    <location>
        <begin position="2"/>
        <end position="333"/>
    </location>
</feature>
<comment type="function">
    <text>Catalyzes the 2,6-dichlorophenolindophenol-dependent cleavage of acetoin into acetate and acetaldehyde, in vitro. The alpha subunit is probably the catalytic subunit of the enzyme.</text>
</comment>
<comment type="cofactor">
    <cofactor>
        <name>thiamine diphosphate</name>
        <dbReference type="ChEBI" id="CHEBI:58937"/>
    </cofactor>
</comment>
<comment type="pathway">
    <text>Ketone degradation; acetoin degradation.</text>
</comment>
<comment type="subunit">
    <text>Tetramer of 2 alpha and 2 beta subunits.</text>
</comment>